<reference key="1">
    <citation type="journal article" date="2002" name="Nat. Biotechnol.">
        <title>Genome sequence of the dissimilatory metal ion-reducing bacterium Shewanella oneidensis.</title>
        <authorList>
            <person name="Heidelberg J.F."/>
            <person name="Paulsen I.T."/>
            <person name="Nelson K.E."/>
            <person name="Gaidos E.J."/>
            <person name="Nelson W.C."/>
            <person name="Read T.D."/>
            <person name="Eisen J.A."/>
            <person name="Seshadri R."/>
            <person name="Ward N.L."/>
            <person name="Methe B.A."/>
            <person name="Clayton R.A."/>
            <person name="Meyer T."/>
            <person name="Tsapin A."/>
            <person name="Scott J."/>
            <person name="Beanan M.J."/>
            <person name="Brinkac L.M."/>
            <person name="Daugherty S.C."/>
            <person name="DeBoy R.T."/>
            <person name="Dodson R.J."/>
            <person name="Durkin A.S."/>
            <person name="Haft D.H."/>
            <person name="Kolonay J.F."/>
            <person name="Madupu R."/>
            <person name="Peterson J.D."/>
            <person name="Umayam L.A."/>
            <person name="White O."/>
            <person name="Wolf A.M."/>
            <person name="Vamathevan J.J."/>
            <person name="Weidman J.F."/>
            <person name="Impraim M."/>
            <person name="Lee K."/>
            <person name="Berry K.J."/>
            <person name="Lee C."/>
            <person name="Mueller J."/>
            <person name="Khouri H.M."/>
            <person name="Gill J."/>
            <person name="Utterback T.R."/>
            <person name="McDonald L.A."/>
            <person name="Feldblyum T.V."/>
            <person name="Smith H.O."/>
            <person name="Venter J.C."/>
            <person name="Nealson K.H."/>
            <person name="Fraser C.M."/>
        </authorList>
    </citation>
    <scope>NUCLEOTIDE SEQUENCE [LARGE SCALE GENOMIC DNA]</scope>
    <source>
        <strain>ATCC 700550 / JCM 31522 / CIP 106686 / LMG 19005 / NCIMB 14063 / MR-1</strain>
    </source>
</reference>
<organism>
    <name type="scientific">Shewanella oneidensis (strain ATCC 700550 / JCM 31522 / CIP 106686 / LMG 19005 / NCIMB 14063 / MR-1)</name>
    <dbReference type="NCBI Taxonomy" id="211586"/>
    <lineage>
        <taxon>Bacteria</taxon>
        <taxon>Pseudomonadati</taxon>
        <taxon>Pseudomonadota</taxon>
        <taxon>Gammaproteobacteria</taxon>
        <taxon>Alteromonadales</taxon>
        <taxon>Shewanellaceae</taxon>
        <taxon>Shewanella</taxon>
    </lineage>
</organism>
<keyword id="KW-1185">Reference proteome</keyword>
<keyword id="KW-0732">Signal</keyword>
<name>Y1816_SHEON</name>
<protein>
    <recommendedName>
        <fullName evidence="1">UPF0319 protein SO_1816</fullName>
    </recommendedName>
</protein>
<gene>
    <name type="ordered locus">SO_1816</name>
</gene>
<feature type="signal peptide" evidence="1">
    <location>
        <begin position="1"/>
        <end position="21"/>
    </location>
</feature>
<feature type="chain" id="PRO_0000036304" description="UPF0319 protein SO_1816">
    <location>
        <begin position="22"/>
        <end position="226"/>
    </location>
</feature>
<accession>Q8EFZ8</accession>
<sequence>MKSLLPISSLLVLLGSASVSAADLNIPMSFEYLALDGKKVESSVFNHKSSLELAPGTHKVAIRYHEMVEDDFSDSQTFVKSSPFIVTLEVDGDHQYYLQAAEGKVVKKPKVFAQNPQVVLTRADKGQVNYQVTNTNIEEESFVSRLFSGNQAVDVSGTAATATGVAVAATPAPTSAQVAVSATATTSPTDASKATGANPQQMLQYWWLQADEKTRKEFMSWAISQL</sequence>
<proteinExistence type="inferred from homology"/>
<dbReference type="EMBL" id="AE014299">
    <property type="protein sequence ID" value="AAN54868.1"/>
    <property type="molecule type" value="Genomic_DNA"/>
</dbReference>
<dbReference type="RefSeq" id="NP_717424.1">
    <property type="nucleotide sequence ID" value="NC_004347.2"/>
</dbReference>
<dbReference type="RefSeq" id="WP_011071937.1">
    <property type="nucleotide sequence ID" value="NC_004347.2"/>
</dbReference>
<dbReference type="STRING" id="211586.SO_1816"/>
<dbReference type="PaxDb" id="211586-SO_1816"/>
<dbReference type="KEGG" id="son:SO_1816"/>
<dbReference type="PATRIC" id="fig|1028802.3.peg.1568"/>
<dbReference type="eggNOG" id="COG3110">
    <property type="taxonomic scope" value="Bacteria"/>
</dbReference>
<dbReference type="HOGENOM" id="CLU_1155758_0_0_6"/>
<dbReference type="OrthoDB" id="5734775at2"/>
<dbReference type="BioCyc" id="SONE211586:G1GMP-1668-MONOMER"/>
<dbReference type="Proteomes" id="UP000008186">
    <property type="component" value="Chromosome"/>
</dbReference>
<dbReference type="HAMAP" id="MF_00789">
    <property type="entry name" value="UPF0319"/>
    <property type="match status" value="1"/>
</dbReference>
<dbReference type="InterPro" id="IPR018635">
    <property type="entry name" value="UPF0319"/>
</dbReference>
<dbReference type="PANTHER" id="PTHR38108">
    <property type="entry name" value="UPF0319 PROTEIN YCCT"/>
    <property type="match status" value="1"/>
</dbReference>
<dbReference type="PANTHER" id="PTHR38108:SF1">
    <property type="entry name" value="UPF0319 PROTEIN YCCT"/>
    <property type="match status" value="1"/>
</dbReference>
<dbReference type="Pfam" id="PF09829">
    <property type="entry name" value="DUF2057"/>
    <property type="match status" value="1"/>
</dbReference>
<comment type="similarity">
    <text evidence="1">Belongs to the UPF0319 family.</text>
</comment>
<evidence type="ECO:0000255" key="1">
    <source>
        <dbReference type="HAMAP-Rule" id="MF_00789"/>
    </source>
</evidence>